<accession>Q9XJP3</accession>
<proteinExistence type="evidence at protein level"/>
<evidence type="ECO:0000269" key="1">
    <source>
    </source>
</evidence>
<evidence type="ECO:0000269" key="2">
    <source>
    </source>
</evidence>
<evidence type="ECO:0000269" key="3">
    <source>
    </source>
</evidence>
<evidence type="ECO:0000305" key="4"/>
<evidence type="ECO:0000305" key="5">
    <source>
    </source>
</evidence>
<evidence type="ECO:0000305" key="6">
    <source>
    </source>
</evidence>
<evidence type="ECO:0007829" key="7">
    <source>
        <dbReference type="PDB" id="2VBK"/>
    </source>
</evidence>
<evidence type="ECO:0007829" key="8">
    <source>
        <dbReference type="PDB" id="7SG7"/>
    </source>
</evidence>
<reference key="1">
    <citation type="journal article" date="1999" name="Microbiology">
        <title>The Shigella flexneri bacteriophage Sf6 tailspike protein (TSP)/endorhamnosidase is related to the bacteriophage P22 TSP and has a motif common to exo- and endoglycanases, and C-5 epimerases.</title>
        <authorList>
            <person name="Chua J.E.H."/>
            <person name="Manning P.A."/>
            <person name="Morona R."/>
        </authorList>
    </citation>
    <scope>NUCLEOTIDE SEQUENCE [GENOMIC DNA]</scope>
</reference>
<reference key="2">
    <citation type="journal article" date="2003" name="J. Biol. Chem.">
        <title>The tailspike protein of Shigella phage Sf6: a structural homolog of Salmonella phage P22 tailspike protein without sequence similarity in the beta-helix domain.</title>
        <authorList>
            <person name="Freiberg A."/>
            <person name="Morona R."/>
            <person name="Van Den Bosch L."/>
            <person name="Jung C."/>
            <person name="Behlke J."/>
            <person name="Carlin N."/>
            <person name="Seckler R."/>
            <person name="Baxa U."/>
        </authorList>
    </citation>
    <scope>NUCLEOTIDE SEQUENCE [GENOMIC DNA]</scope>
    <scope>SEQUENCE REVISION TO 240-251</scope>
    <scope>SUBUNIT</scope>
    <scope>CATALYTIC ACTIVITY</scope>
</reference>
<reference key="3">
    <citation type="journal article" date="1976" name="Eur. J. Biochem.">
        <title>Enzymic and molecular properties of base-plate parts of bacteriophage P22.</title>
        <authorList>
            <person name="Iwashita S."/>
            <person name="Kanegasaki S."/>
        </authorList>
    </citation>
    <scope>CATALYTIC ACTIVITY</scope>
    <scope>BIOPHYSICOCHEMICAL PROPERTIES</scope>
    <scope>FUNCTION</scope>
    <scope>SUBCELLULAR LOCATION</scope>
</reference>
<reference key="4">
    <citation type="journal article" date="2008" name="Structure">
        <title>An intersubunit active site between supercoiled parallel beta helices in the trimeric tailspike endorhamnosidase of Shigella flexneri Phage Sf6.</title>
        <authorList>
            <person name="Mueller J.J."/>
            <person name="Barbirz S."/>
            <person name="Heinle K."/>
            <person name="Freiberg A."/>
            <person name="Seckler R."/>
            <person name="Heinemann U."/>
        </authorList>
    </citation>
    <scope>X-RAY CRYSTALLOGRAPHY (1.25 ANGSTROMS) OF 110-623</scope>
    <scope>FUNCTION</scope>
    <scope>CATALYTIC ACTIVITY</scope>
    <scope>SUBUNIT</scope>
    <scope>MUTAGENESIS OF ASP-248; GLU-294; GLU-367 AND ASP-400</scope>
    <scope>ACTIVE SITE</scope>
</reference>
<comment type="function">
    <text evidence="2 5 6">Non-covalently bound to the neck of the phage capsid and mediating attachment of the viral particle to host cell-surface polysaccharide. It displays endorhamnosidase enzymatic activity, hydrolyzing the alpha-1,3-O-glycosidic linkage between rhamnose and galactose of the O-antigen polysaccharide.</text>
</comment>
<comment type="biophysicochemical properties">
    <phDependence>
        <text evidence="3">Optimum pH is 7.5.</text>
    </phDependence>
</comment>
<comment type="subunit">
    <text evidence="1 2">Homotrimer.</text>
</comment>
<comment type="subcellular location">
    <subcellularLocation>
        <location evidence="3">Virion</location>
    </subcellularLocation>
</comment>
<comment type="domain">
    <text evidence="2">The active site involves residues located on two different subunits.</text>
</comment>
<comment type="similarity">
    <text evidence="4">Belongs to the P22likevirus tail fiber protein family.</text>
</comment>
<protein>
    <recommendedName>
        <fullName evidence="4">Tail spike protein</fullName>
        <shortName>TSP</shortName>
    </recommendedName>
    <alternativeName>
        <fullName evidence="4">Endo-1,3-alpha-L-rhamnosidase</fullName>
        <ecNumber evidence="1 2 3">3.2.1.-</ecNumber>
    </alternativeName>
    <alternativeName>
        <fullName evidence="4">Endorhamnosidase</fullName>
    </alternativeName>
</protein>
<keyword id="KW-0002">3D-structure</keyword>
<keyword id="KW-1235">Degradation of host cell envelope components during virus entry</keyword>
<keyword id="KW-1237">Degradation of host lipopolysaccharides during virus entry</keyword>
<keyword id="KW-0326">Glycosidase</keyword>
<keyword id="KW-0945">Host-virus interaction</keyword>
<keyword id="KW-0378">Hydrolase</keyword>
<keyword id="KW-1161">Viral attachment to host cell</keyword>
<keyword id="KW-1230">Viral tail fiber protein</keyword>
<keyword id="KW-1227">Viral tail protein</keyword>
<keyword id="KW-0946">Virion</keyword>
<keyword id="KW-1160">Virus entry into host cell</keyword>
<sequence length="623" mass="67066">MTDIITNVVIGMPSQLFTMARSFKAVANGKIYIGKIDTDPVNPENQIQVYVENEDGSHVPASQPIVINAAGYPVYNGQIVKFVTEQGHSMAVYDAYGSQQFYFQNVLKYDPDQFGPDLIEQLAQSGKYSQDNTKGDAMIGVKQPLPKAVLRTQHDKNKEAISILDFGVIDDGVTDNYQAIQNAIDAVASLPSGGELFIPASNQAVGYIVGSTLLIPGGVNIRGVGKASQLRAKSGLTGSVLRLSYDSDTIGRYLRNIRVTGNNTCNGIDTNITAEDSVIRQVYGWVFDNVMVNEVETAYLMQGLWHSKFIACQAGTCRVGLHFLGQCVSVSVSSCHFSRGNYSADESFGIRIQPQTYAWSSEAVRSEAIILDSETMCIGFKNAVYVHDCLDLHMEQLDLDYCGSTGVVIENVNGGFSFSNSWIAADADGTEQFTGIYFRTPTSTQSHKIVSGVHINTANKNTAANNQSIAIEQSAIFVFVSGCTLTGDEWAVNIVDINECVSFDKCIFNKPLRYLRSGGVSVTDCYLAGITEVQKPEGRYNTYRGCSGVPSVNGIINVPVAVGATSGSAAIPNPGNLTYRVRSLFGDPASSGDKVSVSGVTINVTRPSPVGVALPSMVEYLAI</sequence>
<organism>
    <name type="scientific">Shigella phage Sf6</name>
    <name type="common">Shigella flexneri bacteriophage VI</name>
    <name type="synonym">Bacteriophage SfVI</name>
    <dbReference type="NCBI Taxonomy" id="10761"/>
    <lineage>
        <taxon>Viruses</taxon>
        <taxon>Duplodnaviria</taxon>
        <taxon>Heunggongvirae</taxon>
        <taxon>Uroviricota</taxon>
        <taxon>Caudoviricetes</taxon>
        <taxon>Lederbergvirus</taxon>
    </lineage>
</organism>
<dbReference type="EC" id="3.2.1.-" evidence="1 2 3"/>
<dbReference type="EMBL" id="AF128887">
    <property type="protein sequence ID" value="AAD33394.2"/>
    <property type="molecule type" value="Genomic_DNA"/>
</dbReference>
<dbReference type="PDB" id="2VBE">
    <property type="method" value="X-ray"/>
    <property type="resolution" value="1.98 A"/>
    <property type="chains" value="A=110-623"/>
</dbReference>
<dbReference type="PDB" id="2VBK">
    <property type="method" value="X-ray"/>
    <property type="resolution" value="1.25 A"/>
    <property type="chains" value="A=110-623"/>
</dbReference>
<dbReference type="PDB" id="2VBM">
    <property type="method" value="X-ray"/>
    <property type="resolution" value="2.00 A"/>
    <property type="chains" value="A=110-623"/>
</dbReference>
<dbReference type="PDB" id="4URR">
    <property type="method" value="X-ray"/>
    <property type="resolution" value="1.95 A"/>
    <property type="chains" value="A/B/C/D/E/F=110-623"/>
</dbReference>
<dbReference type="PDB" id="7SG7">
    <property type="method" value="EM"/>
    <property type="resolution" value="2.83 A"/>
    <property type="chains" value="A/B/C/D/E/F/G/H/I/J/K/L/M/N/O/P/Q/R=1-623"/>
</dbReference>
<dbReference type="PDB" id="7UKJ">
    <property type="method" value="EM"/>
    <property type="resolution" value="3.60 A"/>
    <property type="chains" value="A/B/C=1-623"/>
</dbReference>
<dbReference type="PDBsum" id="2VBE"/>
<dbReference type="PDBsum" id="2VBK"/>
<dbReference type="PDBsum" id="2VBM"/>
<dbReference type="PDBsum" id="4URR"/>
<dbReference type="PDBsum" id="7SG7"/>
<dbReference type="PDBsum" id="7UKJ"/>
<dbReference type="SMR" id="Q9XJP3"/>
<dbReference type="DIP" id="DIP-29798N"/>
<dbReference type="UniLectin" id="Q9XJP3"/>
<dbReference type="EvolutionaryTrace" id="Q9XJP3"/>
<dbReference type="GO" id="GO:0098024">
    <property type="term" value="C:virus tail, fiber"/>
    <property type="evidence" value="ECO:0000314"/>
    <property type="project" value="UniProtKB"/>
</dbReference>
<dbReference type="GO" id="GO:0052775">
    <property type="term" value="F:endo-1,3-alpha-L-rhamnosidase activity"/>
    <property type="evidence" value="ECO:0000314"/>
    <property type="project" value="UniProtKB"/>
</dbReference>
<dbReference type="GO" id="GO:0044409">
    <property type="term" value="P:symbiont entry into host"/>
    <property type="evidence" value="ECO:0000314"/>
    <property type="project" value="UniProtKB"/>
</dbReference>
<dbReference type="GO" id="GO:0098994">
    <property type="term" value="P:symbiont entry into host cell via disruption of host cell envelope"/>
    <property type="evidence" value="ECO:0007669"/>
    <property type="project" value="UniProtKB-KW"/>
</dbReference>
<dbReference type="GO" id="GO:0098995">
    <property type="term" value="P:symbiont entry into host cell via disruption of host cell envelope lipopolysaccharide"/>
    <property type="evidence" value="ECO:0007669"/>
    <property type="project" value="UniProtKB-KW"/>
</dbReference>
<dbReference type="GO" id="GO:0019062">
    <property type="term" value="P:virion attachment to host cell"/>
    <property type="evidence" value="ECO:0000314"/>
    <property type="project" value="UniProtKB"/>
</dbReference>
<dbReference type="FunFam" id="2.160.20.10:FF:000189">
    <property type="entry name" value="Tail spike protein"/>
    <property type="match status" value="1"/>
</dbReference>
<dbReference type="FunFam" id="2.170.14.10:FF:000001">
    <property type="entry name" value="Tail spike protein"/>
    <property type="match status" value="1"/>
</dbReference>
<dbReference type="Gene3D" id="2.170.14.10">
    <property type="entry name" value="Phage P22 tailspike-like, N-terminal domain"/>
    <property type="match status" value="1"/>
</dbReference>
<dbReference type="Gene3D" id="2.160.20.10">
    <property type="entry name" value="Single-stranded right-handed beta-helix, Pectin lyase-like"/>
    <property type="match status" value="1"/>
</dbReference>
<dbReference type="InterPro" id="IPR009093">
    <property type="entry name" value="P22_tailspike_N"/>
</dbReference>
<dbReference type="InterPro" id="IPR036730">
    <property type="entry name" value="P22_tailspike_N_sf"/>
</dbReference>
<dbReference type="InterPro" id="IPR012334">
    <property type="entry name" value="Pectin_lyas_fold"/>
</dbReference>
<dbReference type="InterPro" id="IPR011050">
    <property type="entry name" value="Pectin_lyase_fold/virulence"/>
</dbReference>
<dbReference type="InterPro" id="IPR049104">
    <property type="entry name" value="Tail_spike-like_C"/>
</dbReference>
<dbReference type="Pfam" id="PF09008">
    <property type="entry name" value="Head_binding"/>
    <property type="match status" value="1"/>
</dbReference>
<dbReference type="Pfam" id="PF21519">
    <property type="entry name" value="Tailspike_C"/>
    <property type="match status" value="1"/>
</dbReference>
<dbReference type="SUPFAM" id="SSF51327">
    <property type="entry name" value="Head-binding domain of phage P22 tailspike protein"/>
    <property type="match status" value="1"/>
</dbReference>
<dbReference type="SUPFAM" id="SSF51126">
    <property type="entry name" value="Pectin lyase-like"/>
    <property type="match status" value="1"/>
</dbReference>
<organismHost>
    <name type="scientific">Shigella flexneri</name>
    <dbReference type="NCBI Taxonomy" id="623"/>
</organismHost>
<feature type="chain" id="PRO_0000077758" description="Tail spike protein">
    <location>
        <begin position="1"/>
        <end position="623"/>
    </location>
</feature>
<feature type="active site" description="Shared with dimeric partner" evidence="2">
    <location>
        <position position="367"/>
    </location>
</feature>
<feature type="active site" description="Shared with dimeric partner" evidence="2">
    <location>
        <position position="400"/>
    </location>
</feature>
<feature type="site" description="Substrate binding" evidence="2">
    <location>
        <position position="248"/>
    </location>
</feature>
<feature type="site" description="Substrate binding" evidence="2">
    <location>
        <position position="294"/>
    </location>
</feature>
<feature type="mutagenesis site" description="98.5% loss of enzymatic activity." evidence="2">
    <original>D</original>
    <variation>N</variation>
    <location>
        <position position="248"/>
    </location>
</feature>
<feature type="mutagenesis site" description="87% loss of enzymatic activity." evidence="2">
    <original>E</original>
    <variation>Q</variation>
    <location>
        <position position="294"/>
    </location>
</feature>
<feature type="mutagenesis site" description="Almost complete loss of enzymatic activity." evidence="2">
    <original>E</original>
    <variation>Q</variation>
    <location>
        <position position="367"/>
    </location>
</feature>
<feature type="mutagenesis site" description="Almost complete loss of enzymatic activity." evidence="2">
    <original>D</original>
    <variation>N</variation>
    <location>
        <position position="400"/>
    </location>
</feature>
<feature type="strand" evidence="8">
    <location>
        <begin position="20"/>
        <end position="23"/>
    </location>
</feature>
<feature type="strand" evidence="8">
    <location>
        <begin position="30"/>
        <end position="34"/>
    </location>
</feature>
<feature type="strand" evidence="8">
    <location>
        <begin position="42"/>
        <end position="46"/>
    </location>
</feature>
<feature type="strand" evidence="8">
    <location>
        <begin position="49"/>
        <end position="52"/>
    </location>
</feature>
<feature type="strand" evidence="8">
    <location>
        <begin position="58"/>
        <end position="60"/>
    </location>
</feature>
<feature type="strand" evidence="8">
    <location>
        <begin position="63"/>
        <end position="67"/>
    </location>
</feature>
<feature type="strand" evidence="8">
    <location>
        <begin position="73"/>
        <end position="75"/>
    </location>
</feature>
<feature type="strand" evidence="8">
    <location>
        <begin position="82"/>
        <end position="84"/>
    </location>
</feature>
<feature type="strand" evidence="8">
    <location>
        <begin position="89"/>
        <end position="93"/>
    </location>
</feature>
<feature type="strand" evidence="8">
    <location>
        <begin position="99"/>
        <end position="104"/>
    </location>
</feature>
<feature type="helix" evidence="8">
    <location>
        <begin position="106"/>
        <end position="109"/>
    </location>
</feature>
<feature type="strand" evidence="8">
    <location>
        <begin position="110"/>
        <end position="113"/>
    </location>
</feature>
<feature type="helix" evidence="7">
    <location>
        <begin position="114"/>
        <end position="123"/>
    </location>
</feature>
<feature type="helix" evidence="7">
    <location>
        <begin position="126"/>
        <end position="128"/>
    </location>
</feature>
<feature type="helix" evidence="7">
    <location>
        <begin position="135"/>
        <end position="138"/>
    </location>
</feature>
<feature type="strand" evidence="7">
    <location>
        <begin position="139"/>
        <end position="141"/>
    </location>
</feature>
<feature type="helix" evidence="7">
    <location>
        <begin position="153"/>
        <end position="157"/>
    </location>
</feature>
<feature type="helix" evidence="7">
    <location>
        <begin position="163"/>
        <end position="166"/>
    </location>
</feature>
<feature type="strand" evidence="7">
    <location>
        <begin position="171"/>
        <end position="174"/>
    </location>
</feature>
<feature type="helix" evidence="7">
    <location>
        <begin position="177"/>
        <end position="188"/>
    </location>
</feature>
<feature type="strand" evidence="7">
    <location>
        <begin position="194"/>
        <end position="197"/>
    </location>
</feature>
<feature type="strand" evidence="7">
    <location>
        <begin position="207"/>
        <end position="211"/>
    </location>
</feature>
<feature type="strand" evidence="7">
    <location>
        <begin position="213"/>
        <end position="215"/>
    </location>
</feature>
<feature type="strand" evidence="7">
    <location>
        <begin position="219"/>
        <end position="222"/>
    </location>
</feature>
<feature type="strand" evidence="7">
    <location>
        <begin position="228"/>
        <end position="232"/>
    </location>
</feature>
<feature type="strand" evidence="7">
    <location>
        <begin position="238"/>
        <end position="243"/>
    </location>
</feature>
<feature type="strand" evidence="7">
    <location>
        <begin position="252"/>
        <end position="256"/>
    </location>
</feature>
<feature type="strand" evidence="7">
    <location>
        <begin position="258"/>
        <end position="260"/>
    </location>
</feature>
<feature type="strand" evidence="7">
    <location>
        <begin position="263"/>
        <end position="271"/>
    </location>
</feature>
<feature type="strand" evidence="7">
    <location>
        <begin position="282"/>
        <end position="289"/>
    </location>
</feature>
<feature type="strand" evidence="7">
    <location>
        <begin position="291"/>
        <end position="311"/>
    </location>
</feature>
<feature type="strand" evidence="7">
    <location>
        <begin position="313"/>
        <end position="325"/>
    </location>
</feature>
<feature type="strand" evidence="7">
    <location>
        <begin position="328"/>
        <end position="334"/>
    </location>
</feature>
<feature type="strand" evidence="7">
    <location>
        <begin position="336"/>
        <end position="338"/>
    </location>
</feature>
<feature type="strand" evidence="7">
    <location>
        <begin position="348"/>
        <end position="353"/>
    </location>
</feature>
<feature type="turn" evidence="7">
    <location>
        <begin position="358"/>
        <end position="360"/>
    </location>
</feature>
<feature type="strand" evidence="7">
    <location>
        <begin position="367"/>
        <end position="379"/>
    </location>
</feature>
<feature type="strand" evidence="7">
    <location>
        <begin position="381"/>
        <end position="387"/>
    </location>
</feature>
<feature type="strand" evidence="7">
    <location>
        <begin position="390"/>
        <end position="410"/>
    </location>
</feature>
<feature type="strand" evidence="7">
    <location>
        <begin position="413"/>
        <end position="425"/>
    </location>
</feature>
<feature type="strand" evidence="7">
    <location>
        <begin position="434"/>
        <end position="438"/>
    </location>
</feature>
<feature type="strand" evidence="7">
    <location>
        <begin position="448"/>
        <end position="456"/>
    </location>
</feature>
<feature type="strand" evidence="7">
    <location>
        <begin position="467"/>
        <end position="471"/>
    </location>
</feature>
<feature type="strand" evidence="7">
    <location>
        <begin position="478"/>
        <end position="482"/>
    </location>
</feature>
<feature type="strand" evidence="7">
    <location>
        <begin position="487"/>
        <end position="489"/>
    </location>
</feature>
<feature type="strand" evidence="7">
    <location>
        <begin position="491"/>
        <end position="496"/>
    </location>
</feature>
<feature type="strand" evidence="7">
    <location>
        <begin position="501"/>
        <end position="505"/>
    </location>
</feature>
<feature type="strand" evidence="7">
    <location>
        <begin position="507"/>
        <end position="510"/>
    </location>
</feature>
<feature type="strand" evidence="7">
    <location>
        <begin position="512"/>
        <end position="516"/>
    </location>
</feature>
<feature type="strand" evidence="7">
    <location>
        <begin position="520"/>
        <end position="524"/>
    </location>
</feature>
<feature type="strand" evidence="7">
    <location>
        <begin position="526"/>
        <end position="528"/>
    </location>
</feature>
<feature type="strand" evidence="7">
    <location>
        <begin position="530"/>
        <end position="534"/>
    </location>
</feature>
<feature type="strand" evidence="7">
    <location>
        <begin position="542"/>
        <end position="545"/>
    </location>
</feature>
<feature type="strand" evidence="7">
    <location>
        <begin position="547"/>
        <end position="550"/>
    </location>
</feature>
<feature type="strand" evidence="7">
    <location>
        <begin position="553"/>
        <end position="558"/>
    </location>
</feature>
<feature type="strand" evidence="7">
    <location>
        <begin position="565"/>
        <end position="570"/>
    </location>
</feature>
<feature type="strand" evidence="7">
    <location>
        <begin position="579"/>
        <end position="583"/>
    </location>
</feature>
<feature type="helix" evidence="7">
    <location>
        <begin position="588"/>
        <end position="590"/>
    </location>
</feature>
<feature type="strand" evidence="7">
    <location>
        <begin position="594"/>
        <end position="598"/>
    </location>
</feature>
<feature type="strand" evidence="7">
    <location>
        <begin position="601"/>
        <end position="605"/>
    </location>
</feature>
<feature type="strand" evidence="7">
    <location>
        <begin position="616"/>
        <end position="622"/>
    </location>
</feature>
<name>FIBER_BPSFV</name>